<name>CEMA_POPTR</name>
<evidence type="ECO:0000255" key="1">
    <source>
        <dbReference type="HAMAP-Rule" id="MF_01308"/>
    </source>
</evidence>
<evidence type="ECO:0000305" key="2"/>
<dbReference type="EMBL" id="EF489041">
    <property type="protein sequence ID" value="ABO36717.1"/>
    <property type="molecule type" value="Genomic_DNA"/>
</dbReference>
<dbReference type="RefSeq" id="YP_001109514.1">
    <property type="nucleotide sequence ID" value="NC_009143.1"/>
</dbReference>
<dbReference type="FunCoup" id="A4GYS3">
    <property type="interactions" value="45"/>
</dbReference>
<dbReference type="STRING" id="3694.A4GYS3"/>
<dbReference type="EnsemblPlants" id="Potri.013G162300.1.v4.1">
    <property type="protein sequence ID" value="Potri.013G162300.1.v4.1"/>
    <property type="gene ID" value="Potri.013G162300.v4.1"/>
</dbReference>
<dbReference type="GeneID" id="4929682"/>
<dbReference type="Gramene" id="Potri.013G162300.1.v4.1">
    <property type="protein sequence ID" value="Potri.013G162300.1.v4.1"/>
    <property type="gene ID" value="Potri.013G162300.v4.1"/>
</dbReference>
<dbReference type="KEGG" id="pop:4929682"/>
<dbReference type="InParanoid" id="A4GYS3"/>
<dbReference type="OMA" id="VVIYHAI"/>
<dbReference type="OrthoDB" id="815100at2759"/>
<dbReference type="Proteomes" id="UP000006729">
    <property type="component" value="Chloroplast"/>
</dbReference>
<dbReference type="GO" id="GO:0009706">
    <property type="term" value="C:chloroplast inner membrane"/>
    <property type="evidence" value="ECO:0007669"/>
    <property type="project" value="UniProtKB-SubCell"/>
</dbReference>
<dbReference type="GO" id="GO:0015297">
    <property type="term" value="F:antiporter activity"/>
    <property type="evidence" value="ECO:0007669"/>
    <property type="project" value="UniProtKB-KW"/>
</dbReference>
<dbReference type="GO" id="GO:0015078">
    <property type="term" value="F:proton transmembrane transporter activity"/>
    <property type="evidence" value="ECO:0007669"/>
    <property type="project" value="UniProtKB-UniRule"/>
</dbReference>
<dbReference type="GO" id="GO:0006813">
    <property type="term" value="P:potassium ion transport"/>
    <property type="evidence" value="ECO:0007669"/>
    <property type="project" value="UniProtKB-UniRule"/>
</dbReference>
<dbReference type="HAMAP" id="MF_01308">
    <property type="entry name" value="CemA_PxcA"/>
    <property type="match status" value="1"/>
</dbReference>
<dbReference type="InterPro" id="IPR004282">
    <property type="entry name" value="CemA"/>
</dbReference>
<dbReference type="PANTHER" id="PTHR33650:SF2">
    <property type="entry name" value="CHLOROPLAST ENVELOPE MEMBRANE PROTEIN"/>
    <property type="match status" value="1"/>
</dbReference>
<dbReference type="PANTHER" id="PTHR33650">
    <property type="entry name" value="CHLOROPLAST ENVELOPE MEMBRANE PROTEIN-RELATED"/>
    <property type="match status" value="1"/>
</dbReference>
<dbReference type="Pfam" id="PF03040">
    <property type="entry name" value="CemA"/>
    <property type="match status" value="1"/>
</dbReference>
<comment type="function">
    <text evidence="1">Contributes to K(+)/H(+) antiport activity by supporting proton efflux to control proton extrusion and homeostasis in chloroplasts in a light-dependent manner to modulate photosynthesis. Prevents excessive induction of non-photochemical quenching (NPQ) under continuous-light conditions. Indirectly promotes efficient inorganic carbon uptake into chloroplasts.</text>
</comment>
<comment type="catalytic activity">
    <reaction evidence="1">
        <text>K(+)(in) + H(+)(out) = K(+)(out) + H(+)(in)</text>
        <dbReference type="Rhea" id="RHEA:29467"/>
        <dbReference type="ChEBI" id="CHEBI:15378"/>
        <dbReference type="ChEBI" id="CHEBI:29103"/>
    </reaction>
</comment>
<comment type="subcellular location">
    <subcellularLocation>
        <location evidence="1">Plastid</location>
        <location evidence="1">Chloroplast inner membrane</location>
        <topology evidence="1">Multi-pass membrane protein</topology>
    </subcellularLocation>
</comment>
<comment type="similarity">
    <text evidence="1 2">Belongs to the CemA family.</text>
</comment>
<organism>
    <name type="scientific">Populus trichocarpa</name>
    <name type="common">Western balsam poplar</name>
    <name type="synonym">Populus balsamifera subsp. trichocarpa</name>
    <dbReference type="NCBI Taxonomy" id="3694"/>
    <lineage>
        <taxon>Eukaryota</taxon>
        <taxon>Viridiplantae</taxon>
        <taxon>Streptophyta</taxon>
        <taxon>Embryophyta</taxon>
        <taxon>Tracheophyta</taxon>
        <taxon>Spermatophyta</taxon>
        <taxon>Magnoliopsida</taxon>
        <taxon>eudicotyledons</taxon>
        <taxon>Gunneridae</taxon>
        <taxon>Pentapetalae</taxon>
        <taxon>rosids</taxon>
        <taxon>fabids</taxon>
        <taxon>Malpighiales</taxon>
        <taxon>Salicaceae</taxon>
        <taxon>Saliceae</taxon>
        <taxon>Populus</taxon>
    </lineage>
</organism>
<geneLocation type="chloroplast"/>
<keyword id="KW-0050">Antiport</keyword>
<keyword id="KW-0150">Chloroplast</keyword>
<keyword id="KW-0375">Hydrogen ion transport</keyword>
<keyword id="KW-0406">Ion transport</keyword>
<keyword id="KW-0472">Membrane</keyword>
<keyword id="KW-0934">Plastid</keyword>
<keyword id="KW-1001">Plastid inner membrane</keyword>
<keyword id="KW-0630">Potassium</keyword>
<keyword id="KW-0633">Potassium transport</keyword>
<keyword id="KW-1185">Reference proteome</keyword>
<keyword id="KW-0812">Transmembrane</keyword>
<keyword id="KW-1133">Transmembrane helix</keyword>
<keyword id="KW-0813">Transport</keyword>
<protein>
    <recommendedName>
        <fullName evidence="1">Potassium/proton antiporter CemA</fullName>
    </recommendedName>
    <alternativeName>
        <fullName evidence="1">Chloroplast envelope membrane protein A</fullName>
        <shortName evidence="1">CemA</shortName>
    </alternativeName>
</protein>
<reference key="1">
    <citation type="journal article" date="2006" name="Science">
        <title>The genome of black cottonwood, Populus trichocarpa (Torr. &amp; Gray).</title>
        <authorList>
            <person name="Tuskan G.A."/>
            <person name="Difazio S."/>
            <person name="Jansson S."/>
            <person name="Bohlmann J."/>
            <person name="Grigoriev I."/>
            <person name="Hellsten U."/>
            <person name="Putnam N."/>
            <person name="Ralph S."/>
            <person name="Rombauts S."/>
            <person name="Salamov A."/>
            <person name="Schein J."/>
            <person name="Sterck L."/>
            <person name="Aerts A."/>
            <person name="Bhalerao R.R."/>
            <person name="Bhalerao R.P."/>
            <person name="Blaudez D."/>
            <person name="Boerjan W."/>
            <person name="Brun A."/>
            <person name="Brunner A."/>
            <person name="Busov V."/>
            <person name="Campbell M."/>
            <person name="Carlson J."/>
            <person name="Chalot M."/>
            <person name="Chapman J."/>
            <person name="Chen G.-L."/>
            <person name="Cooper D."/>
            <person name="Coutinho P.M."/>
            <person name="Couturier J."/>
            <person name="Covert S."/>
            <person name="Cronk Q."/>
            <person name="Cunningham R."/>
            <person name="Davis J."/>
            <person name="Degroeve S."/>
            <person name="Dejardin A."/>
            <person name="dePamphilis C.W."/>
            <person name="Detter J."/>
            <person name="Dirks B."/>
            <person name="Dubchak I."/>
            <person name="Duplessis S."/>
            <person name="Ehlting J."/>
            <person name="Ellis B."/>
            <person name="Gendler K."/>
            <person name="Goodstein D."/>
            <person name="Gribskov M."/>
            <person name="Grimwood J."/>
            <person name="Groover A."/>
            <person name="Gunter L."/>
            <person name="Hamberger B."/>
            <person name="Heinze B."/>
            <person name="Helariutta Y."/>
            <person name="Henrissat B."/>
            <person name="Holligan D."/>
            <person name="Holt R."/>
            <person name="Huang W."/>
            <person name="Islam-Faridi N."/>
            <person name="Jones S."/>
            <person name="Jones-Rhoades M."/>
            <person name="Jorgensen R."/>
            <person name="Joshi C."/>
            <person name="Kangasjaervi J."/>
            <person name="Karlsson J."/>
            <person name="Kelleher C."/>
            <person name="Kirkpatrick R."/>
            <person name="Kirst M."/>
            <person name="Kohler A."/>
            <person name="Kalluri U."/>
            <person name="Larimer F."/>
            <person name="Leebens-Mack J."/>
            <person name="Leple J.-C."/>
            <person name="Locascio P."/>
            <person name="Lou Y."/>
            <person name="Lucas S."/>
            <person name="Martin F."/>
            <person name="Montanini B."/>
            <person name="Napoli C."/>
            <person name="Nelson D.R."/>
            <person name="Nelson C."/>
            <person name="Nieminen K."/>
            <person name="Nilsson O."/>
            <person name="Pereda V."/>
            <person name="Peter G."/>
            <person name="Philippe R."/>
            <person name="Pilate G."/>
            <person name="Poliakov A."/>
            <person name="Razumovskaya J."/>
            <person name="Richardson P."/>
            <person name="Rinaldi C."/>
            <person name="Ritland K."/>
            <person name="Rouze P."/>
            <person name="Ryaboy D."/>
            <person name="Schmutz J."/>
            <person name="Schrader J."/>
            <person name="Segerman B."/>
            <person name="Shin H."/>
            <person name="Siddiqui A."/>
            <person name="Sterky F."/>
            <person name="Terry A."/>
            <person name="Tsai C.-J."/>
            <person name="Uberbacher E."/>
            <person name="Unneberg P."/>
            <person name="Vahala J."/>
            <person name="Wall K."/>
            <person name="Wessler S."/>
            <person name="Yang G."/>
            <person name="Yin T."/>
            <person name="Douglas C."/>
            <person name="Marra M."/>
            <person name="Sandberg G."/>
            <person name="Van de Peer Y."/>
            <person name="Rokhsar D.S."/>
        </authorList>
    </citation>
    <scope>NUCLEOTIDE SEQUENCE [LARGE SCALE GENOMIC DNA]</scope>
    <source>
        <strain>cv. Nisqually</strain>
    </source>
</reference>
<accession>A4GYS3</accession>
<feature type="chain" id="PRO_0000293530" description="Potassium/proton antiporter CemA">
    <location>
        <begin position="1"/>
        <end position="228"/>
    </location>
</feature>
<feature type="transmembrane region" description="Helical" evidence="1">
    <location>
        <begin position="6"/>
        <end position="26"/>
    </location>
</feature>
<feature type="transmembrane region" description="Helical" evidence="1">
    <location>
        <begin position="113"/>
        <end position="133"/>
    </location>
</feature>
<feature type="transmembrane region" description="Helical" evidence="1">
    <location>
        <begin position="188"/>
        <end position="208"/>
    </location>
</feature>
<sequence>MEKKAFIPLLYLTSIVFLPWWVSFSFNKSLGSWIINWWNTSKSETFLNDIQEKSILEKLIEFEELFLLDEMIKEYPETHLQKFRIGIHKETIQLIKMHNADRIDTILHFSTNIICFVILSGYSFLVNEELFILNSWVQEFIYNLSDTIKALSILLLTDLCIGFHSPHGWELMISSFYKDFGFAHNDQIISGLVSTFPVIFDTIFKYWIFRYLNRVSPSLVVIYHSMND</sequence>
<gene>
    <name evidence="1" type="primary">cemA</name>
    <name type="synonym">ycf10</name>
    <name type="ordered locus">Poptr_cp035</name>
</gene>
<proteinExistence type="inferred from homology"/>